<dbReference type="EC" id="6.3.4.2" evidence="1"/>
<dbReference type="EMBL" id="AE017196">
    <property type="protein sequence ID" value="AAS14188.1"/>
    <property type="molecule type" value="Genomic_DNA"/>
</dbReference>
<dbReference type="RefSeq" id="WP_010962616.1">
    <property type="nucleotide sequence ID" value="NZ_OX384529.1"/>
</dbReference>
<dbReference type="SMR" id="Q73HS5"/>
<dbReference type="EnsemblBacteria" id="AAS14188">
    <property type="protein sequence ID" value="AAS14188"/>
    <property type="gene ID" value="WD_0468"/>
</dbReference>
<dbReference type="KEGG" id="wol:WD_0468"/>
<dbReference type="eggNOG" id="COG0504">
    <property type="taxonomic scope" value="Bacteria"/>
</dbReference>
<dbReference type="UniPathway" id="UPA00159">
    <property type="reaction ID" value="UER00277"/>
</dbReference>
<dbReference type="Proteomes" id="UP000008215">
    <property type="component" value="Chromosome"/>
</dbReference>
<dbReference type="GO" id="GO:0005829">
    <property type="term" value="C:cytosol"/>
    <property type="evidence" value="ECO:0007669"/>
    <property type="project" value="TreeGrafter"/>
</dbReference>
<dbReference type="GO" id="GO:0005524">
    <property type="term" value="F:ATP binding"/>
    <property type="evidence" value="ECO:0007669"/>
    <property type="project" value="UniProtKB-KW"/>
</dbReference>
<dbReference type="GO" id="GO:0003883">
    <property type="term" value="F:CTP synthase activity"/>
    <property type="evidence" value="ECO:0007669"/>
    <property type="project" value="UniProtKB-UniRule"/>
</dbReference>
<dbReference type="GO" id="GO:0004359">
    <property type="term" value="F:glutaminase activity"/>
    <property type="evidence" value="ECO:0007669"/>
    <property type="project" value="RHEA"/>
</dbReference>
<dbReference type="GO" id="GO:0042802">
    <property type="term" value="F:identical protein binding"/>
    <property type="evidence" value="ECO:0007669"/>
    <property type="project" value="TreeGrafter"/>
</dbReference>
<dbReference type="GO" id="GO:0046872">
    <property type="term" value="F:metal ion binding"/>
    <property type="evidence" value="ECO:0007669"/>
    <property type="project" value="UniProtKB-KW"/>
</dbReference>
<dbReference type="GO" id="GO:0044210">
    <property type="term" value="P:'de novo' CTP biosynthetic process"/>
    <property type="evidence" value="ECO:0007669"/>
    <property type="project" value="UniProtKB-UniRule"/>
</dbReference>
<dbReference type="GO" id="GO:0019856">
    <property type="term" value="P:pyrimidine nucleobase biosynthetic process"/>
    <property type="evidence" value="ECO:0007669"/>
    <property type="project" value="TreeGrafter"/>
</dbReference>
<dbReference type="CDD" id="cd03113">
    <property type="entry name" value="CTPS_N"/>
    <property type="match status" value="1"/>
</dbReference>
<dbReference type="CDD" id="cd01746">
    <property type="entry name" value="GATase1_CTP_Synthase"/>
    <property type="match status" value="1"/>
</dbReference>
<dbReference type="FunFam" id="3.40.50.300:FF:000009">
    <property type="entry name" value="CTP synthase"/>
    <property type="match status" value="1"/>
</dbReference>
<dbReference type="FunFam" id="3.40.50.880:FF:000002">
    <property type="entry name" value="CTP synthase"/>
    <property type="match status" value="1"/>
</dbReference>
<dbReference type="Gene3D" id="3.40.50.880">
    <property type="match status" value="1"/>
</dbReference>
<dbReference type="Gene3D" id="3.40.50.300">
    <property type="entry name" value="P-loop containing nucleotide triphosphate hydrolases"/>
    <property type="match status" value="1"/>
</dbReference>
<dbReference type="HAMAP" id="MF_01227">
    <property type="entry name" value="PyrG"/>
    <property type="match status" value="1"/>
</dbReference>
<dbReference type="InterPro" id="IPR029062">
    <property type="entry name" value="Class_I_gatase-like"/>
</dbReference>
<dbReference type="InterPro" id="IPR004468">
    <property type="entry name" value="CTP_synthase"/>
</dbReference>
<dbReference type="InterPro" id="IPR017456">
    <property type="entry name" value="CTP_synthase_N"/>
</dbReference>
<dbReference type="InterPro" id="IPR017926">
    <property type="entry name" value="GATASE"/>
</dbReference>
<dbReference type="InterPro" id="IPR033828">
    <property type="entry name" value="GATase1_CTP_Synthase"/>
</dbReference>
<dbReference type="InterPro" id="IPR027417">
    <property type="entry name" value="P-loop_NTPase"/>
</dbReference>
<dbReference type="NCBIfam" id="NF003792">
    <property type="entry name" value="PRK05380.1"/>
    <property type="match status" value="1"/>
</dbReference>
<dbReference type="NCBIfam" id="TIGR00337">
    <property type="entry name" value="PyrG"/>
    <property type="match status" value="1"/>
</dbReference>
<dbReference type="PANTHER" id="PTHR11550">
    <property type="entry name" value="CTP SYNTHASE"/>
    <property type="match status" value="1"/>
</dbReference>
<dbReference type="PANTHER" id="PTHR11550:SF0">
    <property type="entry name" value="CTP SYNTHASE-RELATED"/>
    <property type="match status" value="1"/>
</dbReference>
<dbReference type="Pfam" id="PF06418">
    <property type="entry name" value="CTP_synth_N"/>
    <property type="match status" value="1"/>
</dbReference>
<dbReference type="Pfam" id="PF00117">
    <property type="entry name" value="GATase"/>
    <property type="match status" value="1"/>
</dbReference>
<dbReference type="SUPFAM" id="SSF52317">
    <property type="entry name" value="Class I glutamine amidotransferase-like"/>
    <property type="match status" value="1"/>
</dbReference>
<dbReference type="SUPFAM" id="SSF52540">
    <property type="entry name" value="P-loop containing nucleoside triphosphate hydrolases"/>
    <property type="match status" value="1"/>
</dbReference>
<dbReference type="PROSITE" id="PS51273">
    <property type="entry name" value="GATASE_TYPE_1"/>
    <property type="match status" value="1"/>
</dbReference>
<organism>
    <name type="scientific">Wolbachia pipientis wMel</name>
    <dbReference type="NCBI Taxonomy" id="163164"/>
    <lineage>
        <taxon>Bacteria</taxon>
        <taxon>Pseudomonadati</taxon>
        <taxon>Pseudomonadota</taxon>
        <taxon>Alphaproteobacteria</taxon>
        <taxon>Rickettsiales</taxon>
        <taxon>Anaplasmataceae</taxon>
        <taxon>Wolbachieae</taxon>
        <taxon>Wolbachia</taxon>
    </lineage>
</organism>
<protein>
    <recommendedName>
        <fullName evidence="1">CTP synthase</fullName>
        <ecNumber evidence="1">6.3.4.2</ecNumber>
    </recommendedName>
    <alternativeName>
        <fullName evidence="1">Cytidine 5'-triphosphate synthase</fullName>
    </alternativeName>
    <alternativeName>
        <fullName evidence="1">Cytidine triphosphate synthetase</fullName>
        <shortName evidence="1">CTP synthetase</shortName>
        <shortName evidence="1">CTPS</shortName>
    </alternativeName>
    <alternativeName>
        <fullName evidence="1">UTP--ammonia ligase</fullName>
    </alternativeName>
</protein>
<name>PYRG_WOLPM</name>
<evidence type="ECO:0000255" key="1">
    <source>
        <dbReference type="HAMAP-Rule" id="MF_01227"/>
    </source>
</evidence>
<comment type="function">
    <text evidence="1">Catalyzes the ATP-dependent amination of UTP to CTP with either L-glutamine or ammonia as the source of nitrogen. Regulates intracellular CTP levels through interactions with the four ribonucleotide triphosphates.</text>
</comment>
<comment type="catalytic activity">
    <reaction evidence="1">
        <text>UTP + L-glutamine + ATP + H2O = CTP + L-glutamate + ADP + phosphate + 2 H(+)</text>
        <dbReference type="Rhea" id="RHEA:26426"/>
        <dbReference type="ChEBI" id="CHEBI:15377"/>
        <dbReference type="ChEBI" id="CHEBI:15378"/>
        <dbReference type="ChEBI" id="CHEBI:29985"/>
        <dbReference type="ChEBI" id="CHEBI:30616"/>
        <dbReference type="ChEBI" id="CHEBI:37563"/>
        <dbReference type="ChEBI" id="CHEBI:43474"/>
        <dbReference type="ChEBI" id="CHEBI:46398"/>
        <dbReference type="ChEBI" id="CHEBI:58359"/>
        <dbReference type="ChEBI" id="CHEBI:456216"/>
        <dbReference type="EC" id="6.3.4.2"/>
    </reaction>
</comment>
<comment type="catalytic activity">
    <reaction evidence="1">
        <text>L-glutamine + H2O = L-glutamate + NH4(+)</text>
        <dbReference type="Rhea" id="RHEA:15889"/>
        <dbReference type="ChEBI" id="CHEBI:15377"/>
        <dbReference type="ChEBI" id="CHEBI:28938"/>
        <dbReference type="ChEBI" id="CHEBI:29985"/>
        <dbReference type="ChEBI" id="CHEBI:58359"/>
    </reaction>
</comment>
<comment type="catalytic activity">
    <reaction evidence="1">
        <text>UTP + NH4(+) + ATP = CTP + ADP + phosphate + 2 H(+)</text>
        <dbReference type="Rhea" id="RHEA:16597"/>
        <dbReference type="ChEBI" id="CHEBI:15378"/>
        <dbReference type="ChEBI" id="CHEBI:28938"/>
        <dbReference type="ChEBI" id="CHEBI:30616"/>
        <dbReference type="ChEBI" id="CHEBI:37563"/>
        <dbReference type="ChEBI" id="CHEBI:43474"/>
        <dbReference type="ChEBI" id="CHEBI:46398"/>
        <dbReference type="ChEBI" id="CHEBI:456216"/>
    </reaction>
</comment>
<comment type="activity regulation">
    <text evidence="1">Allosterically activated by GTP, when glutamine is the substrate; GTP has no effect on the reaction when ammonia is the substrate. The allosteric effector GTP functions by stabilizing the protein conformation that binds the tetrahedral intermediate(s) formed during glutamine hydrolysis. Inhibited by the product CTP, via allosteric rather than competitive inhibition.</text>
</comment>
<comment type="pathway">
    <text evidence="1">Pyrimidine metabolism; CTP biosynthesis via de novo pathway; CTP from UDP: step 2/2.</text>
</comment>
<comment type="subunit">
    <text evidence="1">Homotetramer.</text>
</comment>
<comment type="miscellaneous">
    <text evidence="1">CTPSs have evolved a hybrid strategy for distinguishing between UTP and CTP. The overlapping regions of the product feedback inhibitory and substrate sites recognize a common feature in both compounds, the triphosphate moiety. To differentiate isosteric substrate and product pyrimidine rings, an additional pocket far from the expected kinase/ligase catalytic site, specifically recognizes the cytosine and ribose portions of the product inhibitor.</text>
</comment>
<comment type="similarity">
    <text evidence="1">Belongs to the CTP synthase family.</text>
</comment>
<keyword id="KW-0067">ATP-binding</keyword>
<keyword id="KW-0315">Glutamine amidotransferase</keyword>
<keyword id="KW-0436">Ligase</keyword>
<keyword id="KW-0460">Magnesium</keyword>
<keyword id="KW-0479">Metal-binding</keyword>
<keyword id="KW-0547">Nucleotide-binding</keyword>
<keyword id="KW-0665">Pyrimidine biosynthesis</keyword>
<accession>Q73HS5</accession>
<reference key="1">
    <citation type="journal article" date="2004" name="PLoS Biol.">
        <title>Phylogenomics of the reproductive parasite Wolbachia pipientis wMel: a streamlined genome overrun by mobile genetic elements.</title>
        <authorList>
            <person name="Wu M."/>
            <person name="Sun L.V."/>
            <person name="Vamathevan J.J."/>
            <person name="Riegler M."/>
            <person name="DeBoy R.T."/>
            <person name="Brownlie J.C."/>
            <person name="McGraw E.A."/>
            <person name="Martin W."/>
            <person name="Esser C."/>
            <person name="Ahmadinejad N."/>
            <person name="Wiegand C."/>
            <person name="Madupu R."/>
            <person name="Beanan M.J."/>
            <person name="Brinkac L.M."/>
            <person name="Daugherty S.C."/>
            <person name="Durkin A.S."/>
            <person name="Kolonay J.F."/>
            <person name="Nelson W.C."/>
            <person name="Mohamoud Y."/>
            <person name="Lee P."/>
            <person name="Berry K.J."/>
            <person name="Young M.B."/>
            <person name="Utterback T.R."/>
            <person name="Weidman J.F."/>
            <person name="Nierman W.C."/>
            <person name="Paulsen I.T."/>
            <person name="Nelson K.E."/>
            <person name="Tettelin H."/>
            <person name="O'Neill S.L."/>
            <person name="Eisen J.A."/>
        </authorList>
    </citation>
    <scope>NUCLEOTIDE SEQUENCE [LARGE SCALE GENOMIC DNA]</scope>
</reference>
<feature type="chain" id="PRO_0000266260" description="CTP synthase">
    <location>
        <begin position="1"/>
        <end position="529"/>
    </location>
</feature>
<feature type="domain" description="Glutamine amidotransferase type-1" evidence="1">
    <location>
        <begin position="292"/>
        <end position="529"/>
    </location>
</feature>
<feature type="region of interest" description="Amidoligase domain" evidence="1">
    <location>
        <begin position="1"/>
        <end position="267"/>
    </location>
</feature>
<feature type="active site" description="Nucleophile; for glutamine hydrolysis" evidence="1">
    <location>
        <position position="381"/>
    </location>
</feature>
<feature type="active site" evidence="1">
    <location>
        <position position="504"/>
    </location>
</feature>
<feature type="active site" evidence="1">
    <location>
        <position position="506"/>
    </location>
</feature>
<feature type="binding site" evidence="1">
    <location>
        <position position="15"/>
    </location>
    <ligand>
        <name>CTP</name>
        <dbReference type="ChEBI" id="CHEBI:37563"/>
        <note>allosteric inhibitor</note>
    </ligand>
</feature>
<feature type="binding site" evidence="1">
    <location>
        <position position="15"/>
    </location>
    <ligand>
        <name>UTP</name>
        <dbReference type="ChEBI" id="CHEBI:46398"/>
    </ligand>
</feature>
<feature type="binding site" evidence="1">
    <location>
        <begin position="16"/>
        <end position="21"/>
    </location>
    <ligand>
        <name>ATP</name>
        <dbReference type="ChEBI" id="CHEBI:30616"/>
    </ligand>
</feature>
<feature type="binding site" evidence="1">
    <location>
        <position position="73"/>
    </location>
    <ligand>
        <name>ATP</name>
        <dbReference type="ChEBI" id="CHEBI:30616"/>
    </ligand>
</feature>
<feature type="binding site" evidence="1">
    <location>
        <position position="73"/>
    </location>
    <ligand>
        <name>Mg(2+)</name>
        <dbReference type="ChEBI" id="CHEBI:18420"/>
    </ligand>
</feature>
<feature type="binding site" evidence="1">
    <location>
        <position position="141"/>
    </location>
    <ligand>
        <name>Mg(2+)</name>
        <dbReference type="ChEBI" id="CHEBI:18420"/>
    </ligand>
</feature>
<feature type="binding site" evidence="1">
    <location>
        <begin position="148"/>
        <end position="150"/>
    </location>
    <ligand>
        <name>CTP</name>
        <dbReference type="ChEBI" id="CHEBI:37563"/>
        <note>allosteric inhibitor</note>
    </ligand>
</feature>
<feature type="binding site" evidence="1">
    <location>
        <begin position="188"/>
        <end position="193"/>
    </location>
    <ligand>
        <name>CTP</name>
        <dbReference type="ChEBI" id="CHEBI:37563"/>
        <note>allosteric inhibitor</note>
    </ligand>
</feature>
<feature type="binding site" evidence="1">
    <location>
        <begin position="188"/>
        <end position="193"/>
    </location>
    <ligand>
        <name>UTP</name>
        <dbReference type="ChEBI" id="CHEBI:46398"/>
    </ligand>
</feature>
<feature type="binding site" evidence="1">
    <location>
        <position position="224"/>
    </location>
    <ligand>
        <name>CTP</name>
        <dbReference type="ChEBI" id="CHEBI:37563"/>
        <note>allosteric inhibitor</note>
    </ligand>
</feature>
<feature type="binding site" evidence="1">
    <location>
        <position position="224"/>
    </location>
    <ligand>
        <name>UTP</name>
        <dbReference type="ChEBI" id="CHEBI:46398"/>
    </ligand>
</feature>
<feature type="binding site" evidence="1">
    <location>
        <position position="354"/>
    </location>
    <ligand>
        <name>L-glutamine</name>
        <dbReference type="ChEBI" id="CHEBI:58359"/>
    </ligand>
</feature>
<feature type="binding site" evidence="1">
    <location>
        <begin position="382"/>
        <end position="385"/>
    </location>
    <ligand>
        <name>L-glutamine</name>
        <dbReference type="ChEBI" id="CHEBI:58359"/>
    </ligand>
</feature>
<feature type="binding site" evidence="1">
    <location>
        <position position="405"/>
    </location>
    <ligand>
        <name>L-glutamine</name>
        <dbReference type="ChEBI" id="CHEBI:58359"/>
    </ligand>
</feature>
<feature type="binding site" evidence="1">
    <location>
        <position position="459"/>
    </location>
    <ligand>
        <name>L-glutamine</name>
        <dbReference type="ChEBI" id="CHEBI:58359"/>
    </ligand>
</feature>
<gene>
    <name evidence="1" type="primary">pyrG</name>
    <name type="ordered locus">WD_0468</name>
</gene>
<sequence length="529" mass="59028">MKEAKFIFVTGGVVSSLGKGLVASSVGALLQAHGFKIRIRKLDPYLNIDPGTMNPTQHGEVFVTEDGAETDLDLGHYERFTGIKATKDDNITTGKIYHELLKKERRGDYLGKTVQVIPHVTDLIKSFIFNGTEGLDFVICEIGGTVGDIESQPFLEAIRQVNYTLGKQRVILIHLTLIPYLAAAQELKTKPTQHSVRELNSAGLQPDIILCRSEKEIFDNQREKIAKLCNVSLSNVIPAPDVSHIYELPVLYSQCGLDTQILEHFHLSKPKPSLTEWDQIVHSIRHPTQEVTVSIVGKYTEFPDAYKSLVEALNHGAISNKVKVKINWVNSREKEEKPIGEKLQNSHAILVPGGFGDDGVEGKILAINYARTNNIPFFGICLGMQLAIIEFARNVVKLEDAHSEEFRNCKHPIVKLAGDQDDDLGGTMRLGAYKCNINANSKMMDAYSNTTISERHRHRYIINSDYKDDLEKNGLLCSGISEDGTCIEAVELESHPWFIGVQFHPEFQSKPFSPHPLFVSFVKAAIDKK</sequence>
<proteinExistence type="inferred from homology"/>